<feature type="chain" id="PRO_1000195629" description="Large ribosomal subunit protein uL11">
    <location>
        <begin position="1"/>
        <end position="142"/>
    </location>
</feature>
<dbReference type="EMBL" id="AP009240">
    <property type="protein sequence ID" value="BAG79794.1"/>
    <property type="molecule type" value="Genomic_DNA"/>
</dbReference>
<dbReference type="RefSeq" id="WP_001085926.1">
    <property type="nucleotide sequence ID" value="NC_011415.1"/>
</dbReference>
<dbReference type="SMR" id="B6I5J3"/>
<dbReference type="GeneID" id="93777911"/>
<dbReference type="KEGG" id="ecy:ECSE_4270"/>
<dbReference type="HOGENOM" id="CLU_074237_2_0_6"/>
<dbReference type="Proteomes" id="UP000008199">
    <property type="component" value="Chromosome"/>
</dbReference>
<dbReference type="GO" id="GO:0022625">
    <property type="term" value="C:cytosolic large ribosomal subunit"/>
    <property type="evidence" value="ECO:0007669"/>
    <property type="project" value="TreeGrafter"/>
</dbReference>
<dbReference type="GO" id="GO:0070180">
    <property type="term" value="F:large ribosomal subunit rRNA binding"/>
    <property type="evidence" value="ECO:0007669"/>
    <property type="project" value="UniProtKB-UniRule"/>
</dbReference>
<dbReference type="GO" id="GO:0003735">
    <property type="term" value="F:structural constituent of ribosome"/>
    <property type="evidence" value="ECO:0007669"/>
    <property type="project" value="InterPro"/>
</dbReference>
<dbReference type="GO" id="GO:0006412">
    <property type="term" value="P:translation"/>
    <property type="evidence" value="ECO:0007669"/>
    <property type="project" value="UniProtKB-UniRule"/>
</dbReference>
<dbReference type="CDD" id="cd00349">
    <property type="entry name" value="Ribosomal_L11"/>
    <property type="match status" value="1"/>
</dbReference>
<dbReference type="FunFam" id="1.10.10.250:FF:000001">
    <property type="entry name" value="50S ribosomal protein L11"/>
    <property type="match status" value="1"/>
</dbReference>
<dbReference type="FunFam" id="3.30.1550.10:FF:000001">
    <property type="entry name" value="50S ribosomal protein L11"/>
    <property type="match status" value="1"/>
</dbReference>
<dbReference type="Gene3D" id="1.10.10.250">
    <property type="entry name" value="Ribosomal protein L11, C-terminal domain"/>
    <property type="match status" value="1"/>
</dbReference>
<dbReference type="Gene3D" id="3.30.1550.10">
    <property type="entry name" value="Ribosomal protein L11/L12, N-terminal domain"/>
    <property type="match status" value="1"/>
</dbReference>
<dbReference type="HAMAP" id="MF_00736">
    <property type="entry name" value="Ribosomal_uL11"/>
    <property type="match status" value="1"/>
</dbReference>
<dbReference type="InterPro" id="IPR000911">
    <property type="entry name" value="Ribosomal_uL11"/>
</dbReference>
<dbReference type="InterPro" id="IPR006519">
    <property type="entry name" value="Ribosomal_uL11_bac-typ"/>
</dbReference>
<dbReference type="InterPro" id="IPR020783">
    <property type="entry name" value="Ribosomal_uL11_C"/>
</dbReference>
<dbReference type="InterPro" id="IPR036769">
    <property type="entry name" value="Ribosomal_uL11_C_sf"/>
</dbReference>
<dbReference type="InterPro" id="IPR020785">
    <property type="entry name" value="Ribosomal_uL11_CS"/>
</dbReference>
<dbReference type="InterPro" id="IPR020784">
    <property type="entry name" value="Ribosomal_uL11_N"/>
</dbReference>
<dbReference type="InterPro" id="IPR036796">
    <property type="entry name" value="Ribosomal_uL11_N_sf"/>
</dbReference>
<dbReference type="NCBIfam" id="TIGR01632">
    <property type="entry name" value="L11_bact"/>
    <property type="match status" value="1"/>
</dbReference>
<dbReference type="PANTHER" id="PTHR11661">
    <property type="entry name" value="60S RIBOSOMAL PROTEIN L12"/>
    <property type="match status" value="1"/>
</dbReference>
<dbReference type="PANTHER" id="PTHR11661:SF1">
    <property type="entry name" value="LARGE RIBOSOMAL SUBUNIT PROTEIN UL11M"/>
    <property type="match status" value="1"/>
</dbReference>
<dbReference type="Pfam" id="PF00298">
    <property type="entry name" value="Ribosomal_L11"/>
    <property type="match status" value="1"/>
</dbReference>
<dbReference type="Pfam" id="PF03946">
    <property type="entry name" value="Ribosomal_L11_N"/>
    <property type="match status" value="1"/>
</dbReference>
<dbReference type="SMART" id="SM00649">
    <property type="entry name" value="RL11"/>
    <property type="match status" value="1"/>
</dbReference>
<dbReference type="SUPFAM" id="SSF54747">
    <property type="entry name" value="Ribosomal L11/L12e N-terminal domain"/>
    <property type="match status" value="1"/>
</dbReference>
<dbReference type="SUPFAM" id="SSF46906">
    <property type="entry name" value="Ribosomal protein L11, C-terminal domain"/>
    <property type="match status" value="1"/>
</dbReference>
<dbReference type="PROSITE" id="PS00359">
    <property type="entry name" value="RIBOSOMAL_L11"/>
    <property type="match status" value="1"/>
</dbReference>
<protein>
    <recommendedName>
        <fullName evidence="1">Large ribosomal subunit protein uL11</fullName>
    </recommendedName>
    <alternativeName>
        <fullName evidence="2">50S ribosomal protein L11</fullName>
    </alternativeName>
</protein>
<organism>
    <name type="scientific">Escherichia coli (strain SE11)</name>
    <dbReference type="NCBI Taxonomy" id="409438"/>
    <lineage>
        <taxon>Bacteria</taxon>
        <taxon>Pseudomonadati</taxon>
        <taxon>Pseudomonadota</taxon>
        <taxon>Gammaproteobacteria</taxon>
        <taxon>Enterobacterales</taxon>
        <taxon>Enterobacteriaceae</taxon>
        <taxon>Escherichia</taxon>
    </lineage>
</organism>
<accession>B6I5J3</accession>
<comment type="function">
    <text evidence="1">Forms part of the ribosomal stalk which helps the ribosome interact with GTP-bound translation factors.</text>
</comment>
<comment type="subunit">
    <text evidence="1">Part of the ribosomal stalk of the 50S ribosomal subunit. Interacts with L10 and the large rRNA to form the base of the stalk. L10 forms an elongated spine to which L12 dimers bind in a sequential fashion forming a multimeric L10(L12)X complex.</text>
</comment>
<comment type="PTM">
    <text evidence="1">One or more lysine residues are methylated.</text>
</comment>
<comment type="similarity">
    <text evidence="1">Belongs to the universal ribosomal protein uL11 family.</text>
</comment>
<sequence>MAKKVQAYVKLQVAAGMANPSPPVGPALGQQGVNIMEFCKAFNAKTDSIEKGLPIPVVITVYADRSFTFVTKTPPAAVLLKKAAGIKSGSGKPNKDKVGKISRAQLQEIAQTKAADMTGADIEAMTRSIEGTARSMGLVVED</sequence>
<proteinExistence type="inferred from homology"/>
<evidence type="ECO:0000255" key="1">
    <source>
        <dbReference type="HAMAP-Rule" id="MF_00736"/>
    </source>
</evidence>
<evidence type="ECO:0000305" key="2"/>
<name>RL11_ECOSE</name>
<keyword id="KW-0488">Methylation</keyword>
<keyword id="KW-0687">Ribonucleoprotein</keyword>
<keyword id="KW-0689">Ribosomal protein</keyword>
<keyword id="KW-0694">RNA-binding</keyword>
<keyword id="KW-0699">rRNA-binding</keyword>
<gene>
    <name evidence="1" type="primary">rplK</name>
    <name type="ordered locus">ECSE_4270</name>
</gene>
<reference key="1">
    <citation type="journal article" date="2008" name="DNA Res.">
        <title>Complete genome sequence and comparative analysis of the wild-type commensal Escherichia coli strain SE11 isolated from a healthy adult.</title>
        <authorList>
            <person name="Oshima K."/>
            <person name="Toh H."/>
            <person name="Ogura Y."/>
            <person name="Sasamoto H."/>
            <person name="Morita H."/>
            <person name="Park S.-H."/>
            <person name="Ooka T."/>
            <person name="Iyoda S."/>
            <person name="Taylor T.D."/>
            <person name="Hayashi T."/>
            <person name="Itoh K."/>
            <person name="Hattori M."/>
        </authorList>
    </citation>
    <scope>NUCLEOTIDE SEQUENCE [LARGE SCALE GENOMIC DNA]</scope>
    <source>
        <strain>SE11</strain>
    </source>
</reference>